<gene>
    <name type="ordered locus">sll0601</name>
</gene>
<accession>P55175</accession>
<comment type="function">
    <text evidence="1">Hydrolyzes deaminated glutathione (dGSH, 2-oxoglutaramate) to alpha-ketoglutarate (alpha-KG) and cysteinylglycine, alpha-ketoglutaramate (a-KGM), and no activity on glutathione or L-glutamine. May function as a metabolite repair enzyme.</text>
</comment>
<comment type="catalytic activity">
    <reaction evidence="1">
        <text>N-(4-oxoglutaryl)-L-cysteinylglycine + H2O = L-cysteinylglycine + 2-oxoglutarate</text>
        <dbReference type="Rhea" id="RHEA:54532"/>
        <dbReference type="ChEBI" id="CHEBI:15377"/>
        <dbReference type="ChEBI" id="CHEBI:16810"/>
        <dbReference type="ChEBI" id="CHEBI:61694"/>
        <dbReference type="ChEBI" id="CHEBI:138256"/>
        <dbReference type="EC" id="3.5.1.128"/>
    </reaction>
</comment>
<comment type="similarity">
    <text evidence="3">Belongs to the carbon-nitrogen hydrolase superfamily. NIT1/NIT2 family.</text>
</comment>
<reference key="1">
    <citation type="journal article" date="1995" name="DNA Res.">
        <title>Sequence analysis of the genome of the unicellular cyanobacterium Synechocystis sp. strain PCC6803. I. Sequence features in the 1 Mb region from map positions 64% to 92% of the genome.</title>
        <authorList>
            <person name="Kaneko T."/>
            <person name="Tanaka A."/>
            <person name="Sato S."/>
            <person name="Kotani H."/>
            <person name="Sazuka T."/>
            <person name="Miyajima N."/>
            <person name="Sugiura M."/>
            <person name="Tabata S."/>
        </authorList>
    </citation>
    <scope>NUCLEOTIDE SEQUENCE [LARGE SCALE GENOMIC DNA]</scope>
    <source>
        <strain>ATCC 27184 / PCC 6803 / N-1</strain>
    </source>
</reference>
<reference key="2">
    <citation type="journal article" date="1996" name="DNA Res.">
        <title>Sequence analysis of the genome of the unicellular cyanobacterium Synechocystis sp. strain PCC6803. II. Sequence determination of the entire genome and assignment of potential protein-coding regions.</title>
        <authorList>
            <person name="Kaneko T."/>
            <person name="Sato S."/>
            <person name="Kotani H."/>
            <person name="Tanaka A."/>
            <person name="Asamizu E."/>
            <person name="Nakamura Y."/>
            <person name="Miyajima N."/>
            <person name="Hirosawa M."/>
            <person name="Sugiura M."/>
            <person name="Sasamoto S."/>
            <person name="Kimura T."/>
            <person name="Hosouchi T."/>
            <person name="Matsuno A."/>
            <person name="Muraki A."/>
            <person name="Nakazaki N."/>
            <person name="Naruo K."/>
            <person name="Okumura S."/>
            <person name="Shimpo S."/>
            <person name="Takeuchi C."/>
            <person name="Wada T."/>
            <person name="Watanabe A."/>
            <person name="Yamada M."/>
            <person name="Yasuda M."/>
            <person name="Tabata S."/>
        </authorList>
    </citation>
    <scope>NUCLEOTIDE SEQUENCE [LARGE SCALE GENOMIC DNA]</scope>
    <source>
        <strain>ATCC 27184 / PCC 6803 / Kazusa</strain>
    </source>
</reference>
<feature type="chain" id="PRO_0000213262" description="Deaminated glutathione amidase">
    <location>
        <begin position="1"/>
        <end position="272"/>
    </location>
</feature>
<feature type="domain" description="CN hydrolase" evidence="2">
    <location>
        <begin position="1"/>
        <end position="253"/>
    </location>
</feature>
<feature type="active site" description="Proton acceptor" evidence="2">
    <location>
        <position position="43"/>
    </location>
</feature>
<feature type="active site" description="Proton donor" evidence="2">
    <location>
        <position position="115"/>
    </location>
</feature>
<feature type="active site" description="Nucleophile" evidence="2">
    <location>
        <position position="158"/>
    </location>
</feature>
<sequence length="272" mass="30191">MKPYLAAALQMTSRPNLTENLQEAEELIDLAVRQGAELVGLPENFAFLGNETEKLEQATAIATATEKFLQTMAQRFQVTILAGGFPFPVAGEAGKAYNTATLIAPNGQELARYHKVHLFDVNVPDGNTYWESATVMAGQKYPPVYHSDSFGNLGLSICYDVRFPELYRYLSRQGADVLFVPAAFTAYTGKDHWQVLLQARAIENTCYVIAPAQTGCHYERRHTHGHAMIIDPWGVILADAGEKPGLAIAEINPDRLKQVRQQMPSLQHRVFV</sequence>
<dbReference type="EC" id="3.5.1.128" evidence="1"/>
<dbReference type="EMBL" id="BA000022">
    <property type="protein sequence ID" value="BAA10370.1"/>
    <property type="molecule type" value="Genomic_DNA"/>
</dbReference>
<dbReference type="PIR" id="S76524">
    <property type="entry name" value="S76524"/>
</dbReference>
<dbReference type="SMR" id="P55175"/>
<dbReference type="FunCoup" id="P55175">
    <property type="interactions" value="433"/>
</dbReference>
<dbReference type="IntAct" id="P55175">
    <property type="interactions" value="2"/>
</dbReference>
<dbReference type="PaxDb" id="1148-1001639"/>
<dbReference type="EnsemblBacteria" id="BAA10370">
    <property type="protein sequence ID" value="BAA10370"/>
    <property type="gene ID" value="BAA10370"/>
</dbReference>
<dbReference type="KEGG" id="syn:sll0601"/>
<dbReference type="eggNOG" id="COG0388">
    <property type="taxonomic scope" value="Bacteria"/>
</dbReference>
<dbReference type="InParanoid" id="P55175"/>
<dbReference type="PhylomeDB" id="P55175"/>
<dbReference type="Proteomes" id="UP000001425">
    <property type="component" value="Chromosome"/>
</dbReference>
<dbReference type="GO" id="GO:0110050">
    <property type="term" value="F:deaminated glutathione amidase activity"/>
    <property type="evidence" value="ECO:0007669"/>
    <property type="project" value="UniProtKB-EC"/>
</dbReference>
<dbReference type="GO" id="GO:0050126">
    <property type="term" value="F:N-carbamoylputrescine amidase activity"/>
    <property type="evidence" value="ECO:0000318"/>
    <property type="project" value="GO_Central"/>
</dbReference>
<dbReference type="GO" id="GO:0033388">
    <property type="term" value="P:putrescine biosynthetic process from arginine"/>
    <property type="evidence" value="ECO:0000318"/>
    <property type="project" value="GO_Central"/>
</dbReference>
<dbReference type="CDD" id="cd07572">
    <property type="entry name" value="nit"/>
    <property type="match status" value="1"/>
</dbReference>
<dbReference type="Gene3D" id="3.60.110.10">
    <property type="entry name" value="Carbon-nitrogen hydrolase"/>
    <property type="match status" value="1"/>
</dbReference>
<dbReference type="InterPro" id="IPR003010">
    <property type="entry name" value="C-N_Hydrolase"/>
</dbReference>
<dbReference type="InterPro" id="IPR036526">
    <property type="entry name" value="C-N_Hydrolase_sf"/>
</dbReference>
<dbReference type="InterPro" id="IPR045254">
    <property type="entry name" value="Nit1/2_C-N_Hydrolase"/>
</dbReference>
<dbReference type="InterPro" id="IPR001110">
    <property type="entry name" value="UPF0012_CS"/>
</dbReference>
<dbReference type="PANTHER" id="PTHR23088:SF27">
    <property type="entry name" value="DEAMINATED GLUTATHIONE AMIDASE"/>
    <property type="match status" value="1"/>
</dbReference>
<dbReference type="PANTHER" id="PTHR23088">
    <property type="entry name" value="NITRILASE-RELATED"/>
    <property type="match status" value="1"/>
</dbReference>
<dbReference type="Pfam" id="PF00795">
    <property type="entry name" value="CN_hydrolase"/>
    <property type="match status" value="1"/>
</dbReference>
<dbReference type="SUPFAM" id="SSF56317">
    <property type="entry name" value="Carbon-nitrogen hydrolase"/>
    <property type="match status" value="1"/>
</dbReference>
<dbReference type="PROSITE" id="PS50263">
    <property type="entry name" value="CN_HYDROLASE"/>
    <property type="match status" value="1"/>
</dbReference>
<dbReference type="PROSITE" id="PS01227">
    <property type="entry name" value="UPF0012"/>
    <property type="match status" value="1"/>
</dbReference>
<evidence type="ECO:0000250" key="1">
    <source>
        <dbReference type="UniProtKB" id="P0DP66"/>
    </source>
</evidence>
<evidence type="ECO:0000255" key="2">
    <source>
        <dbReference type="PROSITE-ProRule" id="PRU00054"/>
    </source>
</evidence>
<evidence type="ECO:0000305" key="3"/>
<organism>
    <name type="scientific">Synechocystis sp. (strain ATCC 27184 / PCC 6803 / Kazusa)</name>
    <dbReference type="NCBI Taxonomy" id="1111708"/>
    <lineage>
        <taxon>Bacteria</taxon>
        <taxon>Bacillati</taxon>
        <taxon>Cyanobacteriota</taxon>
        <taxon>Cyanophyceae</taxon>
        <taxon>Synechococcales</taxon>
        <taxon>Merismopediaceae</taxon>
        <taxon>Synechocystis</taxon>
    </lineage>
</organism>
<keyword id="KW-0378">Hydrolase</keyword>
<keyword id="KW-1185">Reference proteome</keyword>
<proteinExistence type="inferred from homology"/>
<name>NIT1_SYNY3</name>
<protein>
    <recommendedName>
        <fullName evidence="3">Deaminated glutathione amidase</fullName>
        <shortName evidence="3">dGSH amidase</shortName>
        <ecNumber evidence="1">3.5.1.128</ecNumber>
    </recommendedName>
    <alternativeName>
        <fullName>Nitrilase homolog 1</fullName>
        <shortName>syNit1</shortName>
    </alternativeName>
</protein>